<keyword id="KW-0067">ATP-binding</keyword>
<keyword id="KW-0143">Chaperone</keyword>
<keyword id="KW-0479">Metal-binding</keyword>
<keyword id="KW-0547">Nucleotide-binding</keyword>
<keyword id="KW-0862">Zinc</keyword>
<reference key="1">
    <citation type="journal article" date="2001" name="Nature">
        <title>Complete genome sequence of a multiple drug resistant Salmonella enterica serovar Typhi CT18.</title>
        <authorList>
            <person name="Parkhill J."/>
            <person name="Dougan G."/>
            <person name="James K.D."/>
            <person name="Thomson N.R."/>
            <person name="Pickard D."/>
            <person name="Wain J."/>
            <person name="Churcher C.M."/>
            <person name="Mungall K.L."/>
            <person name="Bentley S.D."/>
            <person name="Holden M.T.G."/>
            <person name="Sebaihia M."/>
            <person name="Baker S."/>
            <person name="Basham D."/>
            <person name="Brooks K."/>
            <person name="Chillingworth T."/>
            <person name="Connerton P."/>
            <person name="Cronin A."/>
            <person name="Davis P."/>
            <person name="Davies R.M."/>
            <person name="Dowd L."/>
            <person name="White N."/>
            <person name="Farrar J."/>
            <person name="Feltwell T."/>
            <person name="Hamlin N."/>
            <person name="Haque A."/>
            <person name="Hien T.T."/>
            <person name="Holroyd S."/>
            <person name="Jagels K."/>
            <person name="Krogh A."/>
            <person name="Larsen T.S."/>
            <person name="Leather S."/>
            <person name="Moule S."/>
            <person name="O'Gaora P."/>
            <person name="Parry C."/>
            <person name="Quail M.A."/>
            <person name="Rutherford K.M."/>
            <person name="Simmonds M."/>
            <person name="Skelton J."/>
            <person name="Stevens K."/>
            <person name="Whitehead S."/>
            <person name="Barrell B.G."/>
        </authorList>
    </citation>
    <scope>NUCLEOTIDE SEQUENCE [LARGE SCALE GENOMIC DNA]</scope>
    <source>
        <strain>CT18</strain>
    </source>
</reference>
<reference key="2">
    <citation type="journal article" date="2003" name="J. Bacteriol.">
        <title>Comparative genomics of Salmonella enterica serovar Typhi strains Ty2 and CT18.</title>
        <authorList>
            <person name="Deng W."/>
            <person name="Liou S.-R."/>
            <person name="Plunkett G. III"/>
            <person name="Mayhew G.F."/>
            <person name="Rose D.J."/>
            <person name="Burland V."/>
            <person name="Kodoyianni V."/>
            <person name="Schwartz D.C."/>
            <person name="Blattner F.R."/>
        </authorList>
    </citation>
    <scope>NUCLEOTIDE SEQUENCE [LARGE SCALE GENOMIC DNA]</scope>
    <source>
        <strain>ATCC 700931 / Ty2</strain>
    </source>
</reference>
<gene>
    <name evidence="1" type="primary">clpX</name>
    <name type="ordered locus">STY0491</name>
    <name type="ordered locus">t2411</name>
</gene>
<organism>
    <name type="scientific">Salmonella typhi</name>
    <dbReference type="NCBI Taxonomy" id="90370"/>
    <lineage>
        <taxon>Bacteria</taxon>
        <taxon>Pseudomonadati</taxon>
        <taxon>Pseudomonadota</taxon>
        <taxon>Gammaproteobacteria</taxon>
        <taxon>Enterobacterales</taxon>
        <taxon>Enterobacteriaceae</taxon>
        <taxon>Salmonella</taxon>
    </lineage>
</organism>
<comment type="function">
    <text evidence="1">ATP-dependent specificity component of the Clp protease. It directs the protease to specific substrates. Can perform chaperone functions in the absence of ClpP.</text>
</comment>
<comment type="subunit">
    <text evidence="1">Component of the ClpX-ClpP complex. Forms a hexameric ring that, in the presence of ATP, binds to fourteen ClpP subunits assembled into a disk-like structure with a central cavity, resembling the structure of eukaryotic proteasomes.</text>
</comment>
<comment type="similarity">
    <text evidence="1">Belongs to the ClpX chaperone family.</text>
</comment>
<protein>
    <recommendedName>
        <fullName evidence="1">ATP-dependent Clp protease ATP-binding subunit ClpX</fullName>
    </recommendedName>
</protein>
<proteinExistence type="inferred from homology"/>
<accession>Q8Z8V1</accession>
<name>CLPX_SALTI</name>
<sequence length="423" mass="46149">MTDKRKDGSGKLLYCSFCGKSQHEVRKLIAGPSVYICDECVDLCNDIIREEIKEVAPHRERSALPTPHEIRTHLDDYVIGQEQAKKVLAVAVYNHYKRLRNGDTSNGVELGKSNILLTGPTGSGKTLLAETLARLLDVPFTMADATTLTEAGYVGEDVENIIQKLLQKCDYDVQKAQRGIVYIDEIDKISRKSDNPSITRDVSGEGVQQALLKLIEGTVAAVPPQGGRKHPQQEFLQVDTSKILFICGGAFAGLDKVIANRVETGSGIGFGATVKAKSDKASEGELLSQVEPEDLIKFGLIPEFIGRLPVVATLNELSEEALVQILKEPKNALTKQYQALFNLEGVDLEFRDEALNAIARKAMARKTGARGLRSIVEAALLDTMYDLPSMEDVEKVVIDESVIAGQSKPLLIYGKPEAQASGE</sequence>
<dbReference type="EMBL" id="AL513382">
    <property type="protein sequence ID" value="CAD08908.1"/>
    <property type="molecule type" value="Genomic_DNA"/>
</dbReference>
<dbReference type="EMBL" id="AE014613">
    <property type="protein sequence ID" value="AAO70001.1"/>
    <property type="molecule type" value="Genomic_DNA"/>
</dbReference>
<dbReference type="RefSeq" id="NP_455046.1">
    <property type="nucleotide sequence ID" value="NC_003198.1"/>
</dbReference>
<dbReference type="RefSeq" id="WP_000130316.1">
    <property type="nucleotide sequence ID" value="NZ_WSUR01000026.1"/>
</dbReference>
<dbReference type="SMR" id="Q8Z8V1"/>
<dbReference type="STRING" id="220341.gene:17584513"/>
<dbReference type="KEGG" id="stt:t2411"/>
<dbReference type="KEGG" id="sty:STY0491"/>
<dbReference type="PATRIC" id="fig|220341.7.peg.493"/>
<dbReference type="eggNOG" id="COG1219">
    <property type="taxonomic scope" value="Bacteria"/>
</dbReference>
<dbReference type="HOGENOM" id="CLU_014218_8_2_6"/>
<dbReference type="OMA" id="LDTMFDL"/>
<dbReference type="OrthoDB" id="9804062at2"/>
<dbReference type="Proteomes" id="UP000000541">
    <property type="component" value="Chromosome"/>
</dbReference>
<dbReference type="Proteomes" id="UP000002670">
    <property type="component" value="Chromosome"/>
</dbReference>
<dbReference type="GO" id="GO:0009376">
    <property type="term" value="C:HslUV protease complex"/>
    <property type="evidence" value="ECO:0007669"/>
    <property type="project" value="TreeGrafter"/>
</dbReference>
<dbReference type="GO" id="GO:0005524">
    <property type="term" value="F:ATP binding"/>
    <property type="evidence" value="ECO:0007669"/>
    <property type="project" value="UniProtKB-UniRule"/>
</dbReference>
<dbReference type="GO" id="GO:0016887">
    <property type="term" value="F:ATP hydrolysis activity"/>
    <property type="evidence" value="ECO:0007669"/>
    <property type="project" value="InterPro"/>
</dbReference>
<dbReference type="GO" id="GO:0140662">
    <property type="term" value="F:ATP-dependent protein folding chaperone"/>
    <property type="evidence" value="ECO:0007669"/>
    <property type="project" value="InterPro"/>
</dbReference>
<dbReference type="GO" id="GO:0046983">
    <property type="term" value="F:protein dimerization activity"/>
    <property type="evidence" value="ECO:0007669"/>
    <property type="project" value="InterPro"/>
</dbReference>
<dbReference type="GO" id="GO:0051082">
    <property type="term" value="F:unfolded protein binding"/>
    <property type="evidence" value="ECO:0007669"/>
    <property type="project" value="UniProtKB-UniRule"/>
</dbReference>
<dbReference type="GO" id="GO:0008270">
    <property type="term" value="F:zinc ion binding"/>
    <property type="evidence" value="ECO:0007669"/>
    <property type="project" value="InterPro"/>
</dbReference>
<dbReference type="GO" id="GO:0051301">
    <property type="term" value="P:cell division"/>
    <property type="evidence" value="ECO:0007669"/>
    <property type="project" value="TreeGrafter"/>
</dbReference>
<dbReference type="GO" id="GO:0051603">
    <property type="term" value="P:proteolysis involved in protein catabolic process"/>
    <property type="evidence" value="ECO:0007669"/>
    <property type="project" value="TreeGrafter"/>
</dbReference>
<dbReference type="CDD" id="cd19497">
    <property type="entry name" value="RecA-like_ClpX"/>
    <property type="match status" value="1"/>
</dbReference>
<dbReference type="FunFam" id="1.10.8.60:FF:000002">
    <property type="entry name" value="ATP-dependent Clp protease ATP-binding subunit ClpX"/>
    <property type="match status" value="1"/>
</dbReference>
<dbReference type="FunFam" id="3.40.50.300:FF:000005">
    <property type="entry name" value="ATP-dependent Clp protease ATP-binding subunit ClpX"/>
    <property type="match status" value="1"/>
</dbReference>
<dbReference type="Gene3D" id="1.10.8.60">
    <property type="match status" value="1"/>
</dbReference>
<dbReference type="Gene3D" id="6.20.220.10">
    <property type="entry name" value="ClpX chaperone, C4-type zinc finger domain"/>
    <property type="match status" value="1"/>
</dbReference>
<dbReference type="Gene3D" id="3.40.50.300">
    <property type="entry name" value="P-loop containing nucleotide triphosphate hydrolases"/>
    <property type="match status" value="1"/>
</dbReference>
<dbReference type="HAMAP" id="MF_00175">
    <property type="entry name" value="ClpX"/>
    <property type="match status" value="1"/>
</dbReference>
<dbReference type="InterPro" id="IPR003593">
    <property type="entry name" value="AAA+_ATPase"/>
</dbReference>
<dbReference type="InterPro" id="IPR050052">
    <property type="entry name" value="ATP-dep_Clp_protease_ClpX"/>
</dbReference>
<dbReference type="InterPro" id="IPR003959">
    <property type="entry name" value="ATPase_AAA_core"/>
</dbReference>
<dbReference type="InterPro" id="IPR019489">
    <property type="entry name" value="Clp_ATPase_C"/>
</dbReference>
<dbReference type="InterPro" id="IPR004487">
    <property type="entry name" value="Clp_protease_ATP-bd_su_ClpX"/>
</dbReference>
<dbReference type="InterPro" id="IPR046425">
    <property type="entry name" value="ClpX_bact"/>
</dbReference>
<dbReference type="InterPro" id="IPR027417">
    <property type="entry name" value="P-loop_NTPase"/>
</dbReference>
<dbReference type="InterPro" id="IPR010603">
    <property type="entry name" value="Znf_CppX_C4"/>
</dbReference>
<dbReference type="InterPro" id="IPR038366">
    <property type="entry name" value="Znf_CppX_C4_sf"/>
</dbReference>
<dbReference type="NCBIfam" id="TIGR00382">
    <property type="entry name" value="clpX"/>
    <property type="match status" value="1"/>
</dbReference>
<dbReference type="NCBIfam" id="NF003745">
    <property type="entry name" value="PRK05342.1"/>
    <property type="match status" value="1"/>
</dbReference>
<dbReference type="PANTHER" id="PTHR48102:SF7">
    <property type="entry name" value="ATP-DEPENDENT CLP PROTEASE ATP-BINDING SUBUNIT CLPX-LIKE, MITOCHONDRIAL"/>
    <property type="match status" value="1"/>
</dbReference>
<dbReference type="PANTHER" id="PTHR48102">
    <property type="entry name" value="ATP-DEPENDENT CLP PROTEASE ATP-BINDING SUBUNIT CLPX-LIKE, MITOCHONDRIAL-RELATED"/>
    <property type="match status" value="1"/>
</dbReference>
<dbReference type="Pfam" id="PF07724">
    <property type="entry name" value="AAA_2"/>
    <property type="match status" value="1"/>
</dbReference>
<dbReference type="Pfam" id="PF10431">
    <property type="entry name" value="ClpB_D2-small"/>
    <property type="match status" value="1"/>
</dbReference>
<dbReference type="Pfam" id="PF06689">
    <property type="entry name" value="zf-C4_ClpX"/>
    <property type="match status" value="1"/>
</dbReference>
<dbReference type="SMART" id="SM00382">
    <property type="entry name" value="AAA"/>
    <property type="match status" value="1"/>
</dbReference>
<dbReference type="SMART" id="SM01086">
    <property type="entry name" value="ClpB_D2-small"/>
    <property type="match status" value="1"/>
</dbReference>
<dbReference type="SMART" id="SM00994">
    <property type="entry name" value="zf-C4_ClpX"/>
    <property type="match status" value="1"/>
</dbReference>
<dbReference type="SUPFAM" id="SSF57716">
    <property type="entry name" value="Glucocorticoid receptor-like (DNA-binding domain)"/>
    <property type="match status" value="1"/>
</dbReference>
<dbReference type="SUPFAM" id="SSF52540">
    <property type="entry name" value="P-loop containing nucleoside triphosphate hydrolases"/>
    <property type="match status" value="1"/>
</dbReference>
<dbReference type="PROSITE" id="PS51902">
    <property type="entry name" value="CLPX_ZB"/>
    <property type="match status" value="1"/>
</dbReference>
<feature type="chain" id="PRO_0000160415" description="ATP-dependent Clp protease ATP-binding subunit ClpX">
    <location>
        <begin position="1"/>
        <end position="423"/>
    </location>
</feature>
<feature type="domain" description="ClpX-type ZB" evidence="2">
    <location>
        <begin position="2"/>
        <end position="56"/>
    </location>
</feature>
<feature type="binding site" evidence="2">
    <location>
        <position position="15"/>
    </location>
    <ligand>
        <name>Zn(2+)</name>
        <dbReference type="ChEBI" id="CHEBI:29105"/>
    </ligand>
</feature>
<feature type="binding site" evidence="2">
    <location>
        <position position="18"/>
    </location>
    <ligand>
        <name>Zn(2+)</name>
        <dbReference type="ChEBI" id="CHEBI:29105"/>
    </ligand>
</feature>
<feature type="binding site" evidence="2">
    <location>
        <position position="37"/>
    </location>
    <ligand>
        <name>Zn(2+)</name>
        <dbReference type="ChEBI" id="CHEBI:29105"/>
    </ligand>
</feature>
<feature type="binding site" evidence="2">
    <location>
        <position position="40"/>
    </location>
    <ligand>
        <name>Zn(2+)</name>
        <dbReference type="ChEBI" id="CHEBI:29105"/>
    </ligand>
</feature>
<feature type="binding site" evidence="1">
    <location>
        <begin position="120"/>
        <end position="127"/>
    </location>
    <ligand>
        <name>ATP</name>
        <dbReference type="ChEBI" id="CHEBI:30616"/>
    </ligand>
</feature>
<evidence type="ECO:0000255" key="1">
    <source>
        <dbReference type="HAMAP-Rule" id="MF_00175"/>
    </source>
</evidence>
<evidence type="ECO:0000255" key="2">
    <source>
        <dbReference type="PROSITE-ProRule" id="PRU01250"/>
    </source>
</evidence>